<proteinExistence type="inferred from homology"/>
<keyword id="KW-0285">Flavoprotein</keyword>
<keyword id="KW-0288">FMN</keyword>
<keyword id="KW-0520">NAD</keyword>
<keyword id="KW-0560">Oxidoreductase</keyword>
<keyword id="KW-1185">Reference proteome</keyword>
<gene>
    <name evidence="1" type="primary">azoR2</name>
    <name type="ordered locus">BC_2194</name>
</gene>
<dbReference type="EC" id="1.6.5.-" evidence="1"/>
<dbReference type="EC" id="1.7.1.17" evidence="1"/>
<dbReference type="EMBL" id="AE016877">
    <property type="protein sequence ID" value="AAP09160.1"/>
    <property type="molecule type" value="Genomic_DNA"/>
</dbReference>
<dbReference type="RefSeq" id="NP_831959.1">
    <property type="nucleotide sequence ID" value="NC_004722.1"/>
</dbReference>
<dbReference type="RefSeq" id="WP_000170025.1">
    <property type="nucleotide sequence ID" value="NZ_CP138336.1"/>
</dbReference>
<dbReference type="SMR" id="Q81E02"/>
<dbReference type="STRING" id="226900.BC_2194"/>
<dbReference type="KEGG" id="bce:BC2194"/>
<dbReference type="PATRIC" id="fig|226900.8.peg.2216"/>
<dbReference type="HOGENOM" id="CLU_088964_3_1_9"/>
<dbReference type="OrthoDB" id="9805013at2"/>
<dbReference type="Proteomes" id="UP000001417">
    <property type="component" value="Chromosome"/>
</dbReference>
<dbReference type="GO" id="GO:0009055">
    <property type="term" value="F:electron transfer activity"/>
    <property type="evidence" value="ECO:0007669"/>
    <property type="project" value="UniProtKB-UniRule"/>
</dbReference>
<dbReference type="GO" id="GO:0010181">
    <property type="term" value="F:FMN binding"/>
    <property type="evidence" value="ECO:0007669"/>
    <property type="project" value="UniProtKB-UniRule"/>
</dbReference>
<dbReference type="GO" id="GO:0016652">
    <property type="term" value="F:oxidoreductase activity, acting on NAD(P)H as acceptor"/>
    <property type="evidence" value="ECO:0007669"/>
    <property type="project" value="UniProtKB-UniRule"/>
</dbReference>
<dbReference type="GO" id="GO:0016655">
    <property type="term" value="F:oxidoreductase activity, acting on NAD(P)H, quinone or similar compound as acceptor"/>
    <property type="evidence" value="ECO:0007669"/>
    <property type="project" value="InterPro"/>
</dbReference>
<dbReference type="Gene3D" id="3.40.50.360">
    <property type="match status" value="1"/>
</dbReference>
<dbReference type="HAMAP" id="MF_01216">
    <property type="entry name" value="Azoreductase_type1"/>
    <property type="match status" value="1"/>
</dbReference>
<dbReference type="InterPro" id="IPR003680">
    <property type="entry name" value="Flavodoxin_fold"/>
</dbReference>
<dbReference type="InterPro" id="IPR029039">
    <property type="entry name" value="Flavoprotein-like_sf"/>
</dbReference>
<dbReference type="InterPro" id="IPR050104">
    <property type="entry name" value="FMN-dep_NADH:Q_OxRdtase_AzoR1"/>
</dbReference>
<dbReference type="InterPro" id="IPR023048">
    <property type="entry name" value="NADH:quinone_OxRdtase_FMN_depd"/>
</dbReference>
<dbReference type="NCBIfam" id="NF010075">
    <property type="entry name" value="PRK13556.1"/>
    <property type="match status" value="1"/>
</dbReference>
<dbReference type="PANTHER" id="PTHR43741">
    <property type="entry name" value="FMN-DEPENDENT NADH-AZOREDUCTASE 1"/>
    <property type="match status" value="1"/>
</dbReference>
<dbReference type="PANTHER" id="PTHR43741:SF7">
    <property type="entry name" value="FMN-DEPENDENT NADH:QUINONE OXIDOREDUCTASE"/>
    <property type="match status" value="1"/>
</dbReference>
<dbReference type="Pfam" id="PF02525">
    <property type="entry name" value="Flavodoxin_2"/>
    <property type="match status" value="1"/>
</dbReference>
<dbReference type="SUPFAM" id="SSF52218">
    <property type="entry name" value="Flavoproteins"/>
    <property type="match status" value="1"/>
</dbReference>
<accession>Q81E02</accession>
<name>AZOR2_BACCR</name>
<sequence length="211" mass="22931">MTKVLFITANPNSAEGSFGMAVGEAFIEAYKNEHPQDEVVTIDLFNTTVPAIDADVFAAWGKFAAGEGFEALTEVQQQKVAAMNTNLETFMNADRYVFVTPMWNFSYPPVVKAYLDNVAIAGKTFKYTENGPVGLLEGKKALHIQATGGVYSEGAYAAVDFGRNHLKTVLGFVGVNDTEYIAVEGMNANPEKAQEIKEAAIANARELAKRF</sequence>
<reference key="1">
    <citation type="journal article" date="2003" name="Nature">
        <title>Genome sequence of Bacillus cereus and comparative analysis with Bacillus anthracis.</title>
        <authorList>
            <person name="Ivanova N."/>
            <person name="Sorokin A."/>
            <person name="Anderson I."/>
            <person name="Galleron N."/>
            <person name="Candelon B."/>
            <person name="Kapatral V."/>
            <person name="Bhattacharyya A."/>
            <person name="Reznik G."/>
            <person name="Mikhailova N."/>
            <person name="Lapidus A."/>
            <person name="Chu L."/>
            <person name="Mazur M."/>
            <person name="Goltsman E."/>
            <person name="Larsen N."/>
            <person name="D'Souza M."/>
            <person name="Walunas T."/>
            <person name="Grechkin Y."/>
            <person name="Pusch G."/>
            <person name="Haselkorn R."/>
            <person name="Fonstein M."/>
            <person name="Ehrlich S.D."/>
            <person name="Overbeek R."/>
            <person name="Kyrpides N.C."/>
        </authorList>
    </citation>
    <scope>NUCLEOTIDE SEQUENCE [LARGE SCALE GENOMIC DNA]</scope>
    <source>
        <strain>ATCC 14579 / DSM 31 / CCUG 7414 / JCM 2152 / NBRC 15305 / NCIMB 9373 / NCTC 2599 / NRRL B-3711</strain>
    </source>
</reference>
<feature type="chain" id="PRO_0000245882" description="FMN-dependent NADH:quinone oxidoreductase 2">
    <location>
        <begin position="1"/>
        <end position="211"/>
    </location>
</feature>
<feature type="binding site" evidence="1">
    <location>
        <begin position="102"/>
        <end position="105"/>
    </location>
    <ligand>
        <name>FMN</name>
        <dbReference type="ChEBI" id="CHEBI:58210"/>
    </ligand>
</feature>
<protein>
    <recommendedName>
        <fullName evidence="1">FMN-dependent NADH:quinone oxidoreductase 2</fullName>
        <ecNumber evidence="1">1.6.5.-</ecNumber>
    </recommendedName>
    <alternativeName>
        <fullName evidence="1">Azo-dye reductase 2</fullName>
    </alternativeName>
    <alternativeName>
        <fullName evidence="1">FMN-dependent NADH-azo compound oxidoreductase 2</fullName>
    </alternativeName>
    <alternativeName>
        <fullName evidence="1">FMN-dependent NADH-azoreductase 2</fullName>
        <ecNumber evidence="1">1.7.1.17</ecNumber>
    </alternativeName>
</protein>
<comment type="function">
    <text evidence="1">Quinone reductase that provides resistance to thiol-specific stress caused by electrophilic quinones.</text>
</comment>
<comment type="function">
    <text evidence="1">Also exhibits azoreductase activity. Catalyzes the reductive cleavage of the azo bond in aromatic azo compounds to the corresponding amines.</text>
</comment>
<comment type="catalytic activity">
    <reaction evidence="1">
        <text>2 a quinone + NADH + H(+) = 2 a 1,4-benzosemiquinone + NAD(+)</text>
        <dbReference type="Rhea" id="RHEA:65952"/>
        <dbReference type="ChEBI" id="CHEBI:15378"/>
        <dbReference type="ChEBI" id="CHEBI:57540"/>
        <dbReference type="ChEBI" id="CHEBI:57945"/>
        <dbReference type="ChEBI" id="CHEBI:132124"/>
        <dbReference type="ChEBI" id="CHEBI:134225"/>
    </reaction>
</comment>
<comment type="catalytic activity">
    <reaction evidence="1">
        <text>N,N-dimethyl-1,4-phenylenediamine + anthranilate + 2 NAD(+) = 2-(4-dimethylaminophenyl)diazenylbenzoate + 2 NADH + 2 H(+)</text>
        <dbReference type="Rhea" id="RHEA:55872"/>
        <dbReference type="ChEBI" id="CHEBI:15378"/>
        <dbReference type="ChEBI" id="CHEBI:15783"/>
        <dbReference type="ChEBI" id="CHEBI:16567"/>
        <dbReference type="ChEBI" id="CHEBI:57540"/>
        <dbReference type="ChEBI" id="CHEBI:57945"/>
        <dbReference type="ChEBI" id="CHEBI:71579"/>
        <dbReference type="EC" id="1.7.1.17"/>
    </reaction>
</comment>
<comment type="cofactor">
    <cofactor evidence="1">
        <name>FMN</name>
        <dbReference type="ChEBI" id="CHEBI:58210"/>
    </cofactor>
    <text evidence="1">Binds 1 FMN per subunit.</text>
</comment>
<comment type="subunit">
    <text evidence="1">Homodimer.</text>
</comment>
<comment type="similarity">
    <text evidence="1">Belongs to the azoreductase type 1 family.</text>
</comment>
<evidence type="ECO:0000255" key="1">
    <source>
        <dbReference type="HAMAP-Rule" id="MF_01216"/>
    </source>
</evidence>
<organism>
    <name type="scientific">Bacillus cereus (strain ATCC 14579 / DSM 31 / CCUG 7414 / JCM 2152 / NBRC 15305 / NCIMB 9373 / NCTC 2599 / NRRL B-3711)</name>
    <dbReference type="NCBI Taxonomy" id="226900"/>
    <lineage>
        <taxon>Bacteria</taxon>
        <taxon>Bacillati</taxon>
        <taxon>Bacillota</taxon>
        <taxon>Bacilli</taxon>
        <taxon>Bacillales</taxon>
        <taxon>Bacillaceae</taxon>
        <taxon>Bacillus</taxon>
        <taxon>Bacillus cereus group</taxon>
    </lineage>
</organism>